<gene>
    <name type="primary">thra-b</name>
    <name type="synonym">nr1a1-b</name>
    <name type="synonym">thra2</name>
</gene>
<name>THAB_XENLA</name>
<proteinExistence type="evidence at protein level"/>
<dbReference type="EMBL" id="M35344">
    <property type="protein sequence ID" value="AAA49970.1"/>
    <property type="molecule type" value="mRNA"/>
</dbReference>
<dbReference type="EMBL" id="L76285">
    <property type="protein sequence ID" value="AAC38034.1"/>
    <property type="molecule type" value="mRNA"/>
</dbReference>
<dbReference type="PIR" id="B36067">
    <property type="entry name" value="B36067"/>
</dbReference>
<dbReference type="SMR" id="P18115"/>
<dbReference type="AGR" id="Xenbase:XB-GENE-17340389"/>
<dbReference type="Xenbase" id="XB-GENE-17340389">
    <property type="gene designation" value="thra.S"/>
</dbReference>
<dbReference type="Proteomes" id="UP000186698">
    <property type="component" value="Unplaced"/>
</dbReference>
<dbReference type="GO" id="GO:0005634">
    <property type="term" value="C:nucleus"/>
    <property type="evidence" value="ECO:0000318"/>
    <property type="project" value="GO_Central"/>
</dbReference>
<dbReference type="GO" id="GO:0090575">
    <property type="term" value="C:RNA polymerase II transcription regulator complex"/>
    <property type="evidence" value="ECO:0000318"/>
    <property type="project" value="GO_Central"/>
</dbReference>
<dbReference type="GO" id="GO:0004879">
    <property type="term" value="F:nuclear receptor activity"/>
    <property type="evidence" value="ECO:0000318"/>
    <property type="project" value="GO_Central"/>
</dbReference>
<dbReference type="GO" id="GO:0046965">
    <property type="term" value="F:nuclear retinoid X receptor binding"/>
    <property type="evidence" value="ECO:0000353"/>
    <property type="project" value="UniProtKB"/>
</dbReference>
<dbReference type="GO" id="GO:0046982">
    <property type="term" value="F:protein heterodimerization activity"/>
    <property type="evidence" value="ECO:0000353"/>
    <property type="project" value="UniProtKB"/>
</dbReference>
<dbReference type="GO" id="GO:0042803">
    <property type="term" value="F:protein homodimerization activity"/>
    <property type="evidence" value="ECO:0000314"/>
    <property type="project" value="UniProtKB"/>
</dbReference>
<dbReference type="GO" id="GO:0000978">
    <property type="term" value="F:RNA polymerase II cis-regulatory region sequence-specific DNA binding"/>
    <property type="evidence" value="ECO:0000318"/>
    <property type="project" value="GO_Central"/>
</dbReference>
<dbReference type="GO" id="GO:0043565">
    <property type="term" value="F:sequence-specific DNA binding"/>
    <property type="evidence" value="ECO:0000314"/>
    <property type="project" value="UniProtKB"/>
</dbReference>
<dbReference type="GO" id="GO:0070324">
    <property type="term" value="F:thyroid hormone binding"/>
    <property type="evidence" value="ECO:0000314"/>
    <property type="project" value="UniProtKB"/>
</dbReference>
<dbReference type="GO" id="GO:0008270">
    <property type="term" value="F:zinc ion binding"/>
    <property type="evidence" value="ECO:0007669"/>
    <property type="project" value="UniProtKB-KW"/>
</dbReference>
<dbReference type="GO" id="GO:0030154">
    <property type="term" value="P:cell differentiation"/>
    <property type="evidence" value="ECO:0000318"/>
    <property type="project" value="GO_Central"/>
</dbReference>
<dbReference type="GO" id="GO:0000122">
    <property type="term" value="P:negative regulation of transcription by RNA polymerase II"/>
    <property type="evidence" value="ECO:0000318"/>
    <property type="project" value="GO_Central"/>
</dbReference>
<dbReference type="GO" id="GO:0045893">
    <property type="term" value="P:positive regulation of DNA-templated transcription"/>
    <property type="evidence" value="ECO:0000314"/>
    <property type="project" value="UniProtKB"/>
</dbReference>
<dbReference type="GO" id="GO:0045944">
    <property type="term" value="P:positive regulation of transcription by RNA polymerase II"/>
    <property type="evidence" value="ECO:0000318"/>
    <property type="project" value="GO_Central"/>
</dbReference>
<dbReference type="GO" id="GO:0048384">
    <property type="term" value="P:retinoic acid receptor signaling pathway"/>
    <property type="evidence" value="ECO:0000318"/>
    <property type="project" value="GO_Central"/>
</dbReference>
<dbReference type="GO" id="GO:0002154">
    <property type="term" value="P:thyroid hormone receptor signaling pathway"/>
    <property type="evidence" value="ECO:0000318"/>
    <property type="project" value="GO_Central"/>
</dbReference>
<dbReference type="CDD" id="cd06961">
    <property type="entry name" value="NR_DBD_TR"/>
    <property type="match status" value="1"/>
</dbReference>
<dbReference type="CDD" id="cd06935">
    <property type="entry name" value="NR_LBD_TR"/>
    <property type="match status" value="1"/>
</dbReference>
<dbReference type="FunFam" id="1.10.565.10:FF:000006">
    <property type="entry name" value="Thyroid hormone receptor beta 2"/>
    <property type="match status" value="1"/>
</dbReference>
<dbReference type="FunFam" id="3.30.50.10:FF:000011">
    <property type="entry name" value="Thyroid hormone receptor beta isoform"/>
    <property type="match status" value="1"/>
</dbReference>
<dbReference type="Gene3D" id="3.30.50.10">
    <property type="entry name" value="Erythroid Transcription Factor GATA-1, subunit A"/>
    <property type="match status" value="1"/>
</dbReference>
<dbReference type="Gene3D" id="1.10.565.10">
    <property type="entry name" value="Retinoid X Receptor"/>
    <property type="match status" value="1"/>
</dbReference>
<dbReference type="InterPro" id="IPR035500">
    <property type="entry name" value="NHR-like_dom_sf"/>
</dbReference>
<dbReference type="InterPro" id="IPR000536">
    <property type="entry name" value="Nucl_hrmn_rcpt_lig-bd"/>
</dbReference>
<dbReference type="InterPro" id="IPR050234">
    <property type="entry name" value="Nuclear_hormone_rcpt_NR1"/>
</dbReference>
<dbReference type="InterPro" id="IPR001723">
    <property type="entry name" value="Nuclear_hrmn_rcpt"/>
</dbReference>
<dbReference type="InterPro" id="IPR001728">
    <property type="entry name" value="ThyrH_rcpt"/>
</dbReference>
<dbReference type="InterPro" id="IPR001628">
    <property type="entry name" value="Znf_hrmn_rcpt"/>
</dbReference>
<dbReference type="InterPro" id="IPR013088">
    <property type="entry name" value="Znf_NHR/GATA"/>
</dbReference>
<dbReference type="PANTHER" id="PTHR24082">
    <property type="entry name" value="NUCLEAR HORMONE RECEPTOR"/>
    <property type="match status" value="1"/>
</dbReference>
<dbReference type="PANTHER" id="PTHR24082:SF42">
    <property type="entry name" value="THYROID HORMONE RECEPTOR ALPHA"/>
    <property type="match status" value="1"/>
</dbReference>
<dbReference type="Pfam" id="PF00104">
    <property type="entry name" value="Hormone_recep"/>
    <property type="match status" value="1"/>
</dbReference>
<dbReference type="Pfam" id="PF00105">
    <property type="entry name" value="zf-C4"/>
    <property type="match status" value="1"/>
</dbReference>
<dbReference type="PRINTS" id="PR00398">
    <property type="entry name" value="STRDHORMONER"/>
</dbReference>
<dbReference type="PRINTS" id="PR00047">
    <property type="entry name" value="STROIDFINGER"/>
</dbReference>
<dbReference type="PRINTS" id="PR00546">
    <property type="entry name" value="THYROIDHORMR"/>
</dbReference>
<dbReference type="SMART" id="SM00430">
    <property type="entry name" value="HOLI"/>
    <property type="match status" value="1"/>
</dbReference>
<dbReference type="SMART" id="SM00399">
    <property type="entry name" value="ZnF_C4"/>
    <property type="match status" value="1"/>
</dbReference>
<dbReference type="SUPFAM" id="SSF57716">
    <property type="entry name" value="Glucocorticoid receptor-like (DNA-binding domain)"/>
    <property type="match status" value="1"/>
</dbReference>
<dbReference type="SUPFAM" id="SSF48508">
    <property type="entry name" value="Nuclear receptor ligand-binding domain"/>
    <property type="match status" value="1"/>
</dbReference>
<dbReference type="PROSITE" id="PS51843">
    <property type="entry name" value="NR_LBD"/>
    <property type="match status" value="1"/>
</dbReference>
<dbReference type="PROSITE" id="PS00031">
    <property type="entry name" value="NUCLEAR_REC_DBD_1"/>
    <property type="match status" value="1"/>
</dbReference>
<dbReference type="PROSITE" id="PS51030">
    <property type="entry name" value="NUCLEAR_REC_DBD_2"/>
    <property type="match status" value="1"/>
</dbReference>
<keyword id="KW-0238">DNA-binding</keyword>
<keyword id="KW-0479">Metal-binding</keyword>
<keyword id="KW-0539">Nucleus</keyword>
<keyword id="KW-0675">Receptor</keyword>
<keyword id="KW-1185">Reference proteome</keyword>
<keyword id="KW-0804">Transcription</keyword>
<keyword id="KW-0805">Transcription regulation</keyword>
<keyword id="KW-0862">Zinc</keyword>
<keyword id="KW-0863">Zinc-finger</keyword>
<accession>P18115</accession>
<accession>Q91911</accession>
<reference key="1">
    <citation type="journal article" date="1990" name="Proc. Natl. Acad. Sci. U.S.A.">
        <title>Xenopus laevis alpha and beta thyroid hormone receptors.</title>
        <authorList>
            <person name="Yaoita Y."/>
            <person name="Shi Y.-B."/>
            <person name="Brown D.D."/>
        </authorList>
    </citation>
    <scope>NUCLEOTIDE SEQUENCE [MRNA]</scope>
    <scope>FUNCTION</scope>
    <source>
        <tissue>Tadpole</tissue>
    </source>
</reference>
<reference key="2">
    <citation type="journal article" date="1990" name="Proc. Natl. Acad. Sci. U.S.A.">
        <authorList>
            <person name="Yaoita Y."/>
            <person name="Shi Y.-B."/>
            <person name="Brown D.D."/>
        </authorList>
    </citation>
    <scope>ERRATUM OF PUBMED:2402492</scope>
</reference>
<reference key="3">
    <citation type="journal article" date="1996" name="J. Biol. Chem.">
        <title>Functional characterization of a mutant thyroid hormone receptor in Xenopus laevis.</title>
        <authorList>
            <person name="Puzianowska-Kuznicka M."/>
            <person name="Wong J."/>
            <person name="Kanamori A."/>
            <person name="Shi Y.-B."/>
        </authorList>
    </citation>
    <scope>NUCLEOTIDE SEQUENCE [MRNA]</scope>
    <scope>SEQUENCE REVISION TO 133; 144; 165 AND 392</scope>
    <scope>FUNCTION</scope>
    <scope>SUBUNIT</scope>
    <scope>DEVELOPMENTAL STAGE</scope>
    <source>
        <tissue>Tadpole</tissue>
    </source>
</reference>
<evidence type="ECO:0000255" key="1">
    <source>
        <dbReference type="PROSITE-ProRule" id="PRU00407"/>
    </source>
</evidence>
<evidence type="ECO:0000255" key="2">
    <source>
        <dbReference type="PROSITE-ProRule" id="PRU01189"/>
    </source>
</evidence>
<evidence type="ECO:0000256" key="3">
    <source>
        <dbReference type="SAM" id="MobiDB-lite"/>
    </source>
</evidence>
<evidence type="ECO:0000269" key="4">
    <source>
    </source>
</evidence>
<evidence type="ECO:0000269" key="5">
    <source>
    </source>
</evidence>
<evidence type="ECO:0000305" key="6"/>
<organism>
    <name type="scientific">Xenopus laevis</name>
    <name type="common">African clawed frog</name>
    <dbReference type="NCBI Taxonomy" id="8355"/>
    <lineage>
        <taxon>Eukaryota</taxon>
        <taxon>Metazoa</taxon>
        <taxon>Chordata</taxon>
        <taxon>Craniata</taxon>
        <taxon>Vertebrata</taxon>
        <taxon>Euteleostomi</taxon>
        <taxon>Amphibia</taxon>
        <taxon>Batrachia</taxon>
        <taxon>Anura</taxon>
        <taxon>Pipoidea</taxon>
        <taxon>Pipidae</taxon>
        <taxon>Xenopodinae</taxon>
        <taxon>Xenopus</taxon>
        <taxon>Xenopus</taxon>
    </lineage>
</organism>
<comment type="function">
    <text evidence="4 5">High affinity receptor for triiodothyronine (T3).</text>
</comment>
<comment type="subunit">
    <text evidence="5">Binds to thyroid hormone receptor element (TRE) weakly as homodimers and monomers, but binds TRE with much higher affinity as heterodimers with retinoid X receptors. Can bind DNA as a heterodimer with either rxra or rxrg.</text>
</comment>
<comment type="subcellular location">
    <subcellularLocation>
        <location>Nucleus</location>
    </subcellularLocation>
</comment>
<comment type="domain">
    <text>Composed of three domains: a modulating N-terminal domain, a DNA-binding domain and a C-terminal ligand-binding domain.</text>
</comment>
<comment type="similarity">
    <text evidence="6">Belongs to the nuclear hormone receptor family. NR1 subfamily.</text>
</comment>
<comment type="caution">
    <text evidence="6">The sequence derived in PubMed:2402492 was probably derived from a mutant gene and shows poor transcriptional activation and DNA-binding activity, but is still able to efficiently form heterodimers with retinoic acid receptors.</text>
</comment>
<protein>
    <recommendedName>
        <fullName>Thyroid hormone receptor alpha-B</fullName>
        <shortName>TRalphaB</shortName>
    </recommendedName>
    <alternativeName>
        <fullName>Nuclear receptor subfamily 1 group A member 1-B</fullName>
    </alternativeName>
</protein>
<feature type="chain" id="PRO_0000053444" description="Thyroid hormone receptor alpha-B">
    <location>
        <begin position="1"/>
        <end position="418"/>
    </location>
</feature>
<feature type="domain" description="NR LBD" evidence="2">
    <location>
        <begin position="171"/>
        <end position="415"/>
    </location>
</feature>
<feature type="DNA-binding region" description="Nuclear receptor" evidence="1">
    <location>
        <begin position="61"/>
        <end position="128"/>
    </location>
</feature>
<feature type="zinc finger region" description="NR C4-type" evidence="1">
    <location>
        <begin position="61"/>
        <end position="81"/>
    </location>
</feature>
<feature type="zinc finger region" description="NR C4-type" evidence="1">
    <location>
        <begin position="99"/>
        <end position="123"/>
    </location>
</feature>
<feature type="region of interest" description="Modulating">
    <location>
        <begin position="1"/>
        <end position="60"/>
    </location>
</feature>
<feature type="region of interest" description="Disordered" evidence="3">
    <location>
        <begin position="1"/>
        <end position="40"/>
    </location>
</feature>
<feature type="sequence conflict" description="In Ref. 1; AAA49970." evidence="6" ref="1">
    <original>V</original>
    <variation>D</variation>
    <location>
        <position position="133"/>
    </location>
</feature>
<feature type="sequence conflict" description="In Ref. 1; AAA49970." evidence="6" ref="1">
    <original>N</original>
    <variation>D</variation>
    <location>
        <position position="149"/>
    </location>
</feature>
<feature type="sequence conflict" description="In Ref. 1; AAA49970." evidence="6" ref="1">
    <original>R</original>
    <variation>C</variation>
    <location>
        <position position="165"/>
    </location>
</feature>
<feature type="sequence conflict" description="In Ref. 1; AAA49970." evidence="6" ref="1">
    <original>R</original>
    <variation>C</variation>
    <location>
        <position position="392"/>
    </location>
</feature>
<sequence length="418" mass="47683">MDQNLSGLDCLSEPDEKRWPDGKRKRKNSQCMGKSGMSGDSLVSLPPAGYIPSYLDKDEPCVVCSDKATGYHYRCITCEGCKGFFRRTIQKNLHPSYSCKYDGCCIIDKITRNQCQLCRFKKCIAVGMAMDLVLDDSKRVAKRKLIEENRVRRRKEEMIKTLQQRPEPSSEEWELIRIVTEAHRSTNAQGSHWKQRRKFLPEDIGQSPMASMPDGDKVDLEAFSEFTKIITPAITRVVDFAKKLPMFSELTCEDQIILLKGCCMEIMSLRAAVRYDPDSETLTLSGEMAVKREQLKNGGLGVVSDAIFDLGRSLAAFNLDDTEVALLQAVLLMSSDRTGLICTDKIEKCQETYLLAFEHYINHRKHNIPHFWPKLLMKVTDLRMIGACHASRFLHMKVECPTELFPPLFLEVFEDQEV</sequence>